<name>CAV2_CAEEL</name>
<feature type="chain" id="PRO_0000144144" description="Caveolin-2">
    <location>
        <begin position="1"/>
        <end position="351"/>
    </location>
</feature>
<feature type="topological domain" description="Cytoplasmic" evidence="2">
    <location>
        <begin position="1"/>
        <end position="261"/>
    </location>
</feature>
<feature type="intramembrane region" description="Helical" evidence="2">
    <location>
        <begin position="262"/>
        <end position="290"/>
    </location>
</feature>
<feature type="topological domain" description="Cytoplasmic" evidence="2">
    <location>
        <begin position="291"/>
        <end position="351"/>
    </location>
</feature>
<feature type="region of interest" description="Disordered" evidence="3">
    <location>
        <begin position="1"/>
        <end position="55"/>
    </location>
</feature>
<feature type="region of interest" description="Disordered" evidence="3">
    <location>
        <begin position="71"/>
        <end position="93"/>
    </location>
</feature>
<feature type="region of interest" description="Disordered" evidence="3">
    <location>
        <begin position="144"/>
        <end position="193"/>
    </location>
</feature>
<feature type="compositionally biased region" description="Polar residues" evidence="3">
    <location>
        <begin position="1"/>
        <end position="14"/>
    </location>
</feature>
<feature type="compositionally biased region" description="Acidic residues" evidence="3">
    <location>
        <begin position="22"/>
        <end position="31"/>
    </location>
</feature>
<feature type="compositionally biased region" description="Basic residues" evidence="3">
    <location>
        <begin position="38"/>
        <end position="51"/>
    </location>
</feature>
<feature type="compositionally biased region" description="Low complexity" evidence="3">
    <location>
        <begin position="167"/>
        <end position="184"/>
    </location>
</feature>
<feature type="splice variant" id="VSP_043962" description="In isoform c." evidence="6">
    <location>
        <begin position="1"/>
        <end position="191"/>
    </location>
</feature>
<feature type="splice variant" id="VSP_043963" description="In isoform b." evidence="6">
    <location>
        <begin position="1"/>
        <end position="32"/>
    </location>
</feature>
<feature type="splice variant" id="VSP_043964" description="In isoform d." evidence="6">
    <location>
        <begin position="28"/>
        <end position="97"/>
    </location>
</feature>
<feature type="sequence conflict" description="In Ref. 1; AAB48299." evidence="6" ref="1">
    <original>V</original>
    <variation>F</variation>
    <location>
        <position position="105"/>
    </location>
</feature>
<keyword id="KW-0025">Alternative splicing</keyword>
<keyword id="KW-1003">Cell membrane</keyword>
<keyword id="KW-0333">Golgi apparatus</keyword>
<keyword id="KW-0472">Membrane</keyword>
<keyword id="KW-1185">Reference proteome</keyword>
<comment type="function">
    <text evidence="4 5">May act as a scaffolding protein within caveolar membranes. Interacts directly with G-protein alpha subunits and can regulate their activity. Thought to have a role in the uptake of lipids and proteins in the intestinal cells; operates in the apical uptake of lipid markers and trafficking of yolk proteins. Affects fecundity and egg laying.</text>
</comment>
<comment type="subunit">
    <text evidence="1">Homooligomer.</text>
</comment>
<comment type="subcellular location">
    <subcellularLocation>
        <location evidence="1">Golgi apparatus membrane</location>
        <topology evidence="1">Peripheral membrane protein</topology>
    </subcellularLocation>
    <subcellularLocation>
        <location evidence="1">Cell membrane</location>
        <topology evidence="1">Peripheral membrane protein</topology>
    </subcellularLocation>
    <subcellularLocation>
        <location evidence="1">Membrane</location>
        <location evidence="1">Caveola</location>
        <topology evidence="1">Peripheral membrane protein</topology>
    </subcellularLocation>
    <subcellularLocation>
        <location evidence="4">Apical cell membrane</location>
    </subcellularLocation>
    <text evidence="1">Potential hairpin-like structure in the membrane. Membrane protein of caveolae (By similarity).</text>
</comment>
<comment type="alternative products">
    <event type="alternative splicing"/>
    <isoform>
        <id>Q18879-1</id>
        <name>a</name>
        <sequence type="displayed"/>
    </isoform>
    <isoform>
        <id>Q18879-2</id>
        <name>b</name>
        <sequence type="described" ref="VSP_043963"/>
    </isoform>
    <isoform>
        <id>Q18879-3</id>
        <name>c</name>
        <sequence type="described" ref="VSP_043962"/>
    </isoform>
    <isoform>
        <id>Q18879-4</id>
        <name>d</name>
        <sequence type="described" ref="VSP_043964"/>
    </isoform>
</comment>
<comment type="tissue specificity">
    <text evidence="4">Expressed in intracellular bodies in intestinal cells.</text>
</comment>
<comment type="disruption phenotype">
    <text evidence="4">Defective in the apical uptake of lipid and protein trafficking. Reduced brood size thought to be due to attenuated nutrient supply.</text>
</comment>
<comment type="similarity">
    <text evidence="6">Belongs to the caveolin family.</text>
</comment>
<protein>
    <recommendedName>
        <fullName>Caveolin-2</fullName>
    </recommendedName>
</protein>
<sequence length="351" mass="40771">MTRQNTSESDNTQRPPIPQYDTVDDIDELTDAMDKEDHHHHHHHHEHHHQHQGIAQYDTVEEVETLETVHHRTSLNQEVPTPQRRSHPQYDNLDDIDDQEYITEVEVKSNRGSTLTTRPHVTIKQDEIEDIGERQVTVIEIASQKGSTKRVAPRKDYAPSIPLPEHPAQQSAPPTQQSRPQTTSHKPPNPEMEFDIGVKNIAPVLIHKMNMDDRDPKDSAQYLNTSFFEVFNEPSEQYHSIACVWTLSFKIFEIVRIYSYKILTLIFGLIIAFLGGILFALFAFLNIWIFRPILILTRMAFAQIVLIWPMFLIYIVRPFFYSVGAIFSTARLHTSRGEQVVEVWEKHIHHV</sequence>
<reference key="1">
    <citation type="journal article" date="1997" name="J. Biol. Chem.">
        <title>Identification, sequence, and expression of an invertebrate caveolin gene family from the nematode Caenorhabditis elegans. Implications for the molecular evolution of mammalian caveolin genes.</title>
        <authorList>
            <person name="Tang Z."/>
            <person name="Okamoto T."/>
            <person name="Boontrakulpoontawee P."/>
            <person name="Katada T."/>
            <person name="Otsuka A.J."/>
            <person name="Lisanti M.P."/>
        </authorList>
    </citation>
    <scope>NUCLEOTIDE SEQUENCE [MRNA] (ISOFORM A)</scope>
    <source>
        <strain>Bristol N2</strain>
    </source>
</reference>
<reference key="2">
    <citation type="journal article" date="1998" name="Science">
        <title>Genome sequence of the nematode C. elegans: a platform for investigating biology.</title>
        <authorList>
            <consortium name="The C. elegans sequencing consortium"/>
        </authorList>
    </citation>
    <scope>NUCLEOTIDE SEQUENCE [LARGE SCALE GENOMIC DNA]</scope>
    <scope>ALTERNATIVE SPLICING</scope>
    <source>
        <strain>Bristol N2</strain>
    </source>
</reference>
<reference key="3">
    <citation type="journal article" date="2009" name="Commun. Integr. Biol.">
        <title>Overexpression of caveolins in Caenorhabditis elegans induces changes in egg-laying and fecundity.</title>
        <authorList>
            <person name="Parker S."/>
            <person name="Baylis H.A."/>
        </authorList>
    </citation>
    <scope>FUNCTION</scope>
</reference>
<reference key="4">
    <citation type="journal article" date="2009" name="Mol. Biol. Cell">
        <title>Caveolin-2 is required for apical lipid trafficking and suppresses basolateral recycling defects in the intestine of Caenorhabditis elegans.</title>
        <authorList>
            <person name="Parker S."/>
            <person name="Walker D.S."/>
            <person name="Ly S."/>
            <person name="Baylis H.A."/>
        </authorList>
    </citation>
    <scope>FUNCTION</scope>
    <scope>SUBCELLULAR LOCATION</scope>
    <scope>TISSUE SPECIFICITY</scope>
    <scope>DISRUPTION PHENOTYPE</scope>
</reference>
<proteinExistence type="evidence at transcript level"/>
<organism>
    <name type="scientific">Caenorhabditis elegans</name>
    <dbReference type="NCBI Taxonomy" id="6239"/>
    <lineage>
        <taxon>Eukaryota</taxon>
        <taxon>Metazoa</taxon>
        <taxon>Ecdysozoa</taxon>
        <taxon>Nematoda</taxon>
        <taxon>Chromadorea</taxon>
        <taxon>Rhabditida</taxon>
        <taxon>Rhabditina</taxon>
        <taxon>Rhabditomorpha</taxon>
        <taxon>Rhabditoidea</taxon>
        <taxon>Rhabditidae</taxon>
        <taxon>Peloderinae</taxon>
        <taxon>Caenorhabditis</taxon>
    </lineage>
</organism>
<dbReference type="EMBL" id="U75587">
    <property type="protein sequence ID" value="AAB48299.1"/>
    <property type="molecule type" value="mRNA"/>
</dbReference>
<dbReference type="EMBL" id="Z77655">
    <property type="protein sequence ID" value="CAB01139.1"/>
    <property type="molecule type" value="Genomic_DNA"/>
</dbReference>
<dbReference type="EMBL" id="Z77655">
    <property type="protein sequence ID" value="CBW48350.1"/>
    <property type="molecule type" value="Genomic_DNA"/>
</dbReference>
<dbReference type="EMBL" id="Z77655">
    <property type="protein sequence ID" value="CBW48351.1"/>
    <property type="molecule type" value="Genomic_DNA"/>
</dbReference>
<dbReference type="EMBL" id="Z77655">
    <property type="protein sequence ID" value="CCD31049.1"/>
    <property type="molecule type" value="Genomic_DNA"/>
</dbReference>
<dbReference type="PIR" id="T20270">
    <property type="entry name" value="T20270"/>
</dbReference>
<dbReference type="RefSeq" id="NP_001256523.1">
    <molecule id="Q18879-1"/>
    <property type="nucleotide sequence ID" value="NM_001269594.3"/>
</dbReference>
<dbReference type="RefSeq" id="NP_001256524.1">
    <molecule id="Q18879-4"/>
    <property type="nucleotide sequence ID" value="NM_001269595.3"/>
</dbReference>
<dbReference type="RefSeq" id="NP_001256525.1">
    <molecule id="Q18879-2"/>
    <property type="nucleotide sequence ID" value="NM_001269596.3"/>
</dbReference>
<dbReference type="RefSeq" id="NP_001256526.1">
    <molecule id="Q18879-3"/>
    <property type="nucleotide sequence ID" value="NM_001269597.3"/>
</dbReference>
<dbReference type="FunCoup" id="Q18879">
    <property type="interactions" value="116"/>
</dbReference>
<dbReference type="STRING" id="6239.C56A3.7a.1"/>
<dbReference type="iPTMnet" id="Q18879"/>
<dbReference type="PaxDb" id="6239-C56A3.7a"/>
<dbReference type="PeptideAtlas" id="Q18879"/>
<dbReference type="EnsemblMetazoa" id="C56A3.7a.1">
    <molecule id="Q18879-1"/>
    <property type="protein sequence ID" value="C56A3.7a.1"/>
    <property type="gene ID" value="WBGene00000302"/>
</dbReference>
<dbReference type="EnsemblMetazoa" id="C56A3.7b.1">
    <molecule id="Q18879-2"/>
    <property type="protein sequence ID" value="C56A3.7b.1"/>
    <property type="gene ID" value="WBGene00000302"/>
</dbReference>
<dbReference type="EnsemblMetazoa" id="C56A3.7c.1">
    <molecule id="Q18879-3"/>
    <property type="protein sequence ID" value="C56A3.7c.1"/>
    <property type="gene ID" value="WBGene00000302"/>
</dbReference>
<dbReference type="EnsemblMetazoa" id="C56A3.7d.1">
    <molecule id="Q18879-4"/>
    <property type="protein sequence ID" value="C56A3.7d.1"/>
    <property type="gene ID" value="WBGene00000302"/>
</dbReference>
<dbReference type="GeneID" id="179838"/>
<dbReference type="KEGG" id="cel:CELE_C56A3.7"/>
<dbReference type="UCSC" id="C56A3.7">
    <molecule id="Q18879-1"/>
    <property type="organism name" value="c. elegans"/>
</dbReference>
<dbReference type="AGR" id="WB:WBGene00000302"/>
<dbReference type="CTD" id="179838"/>
<dbReference type="WormBase" id="C56A3.7a">
    <molecule id="Q18879-1"/>
    <property type="protein sequence ID" value="CE15738"/>
    <property type="gene ID" value="WBGene00000302"/>
    <property type="gene designation" value="cav-2"/>
</dbReference>
<dbReference type="WormBase" id="C56A3.7b">
    <molecule id="Q18879-2"/>
    <property type="protein sequence ID" value="CE45292"/>
    <property type="gene ID" value="WBGene00000302"/>
    <property type="gene designation" value="cav-2"/>
</dbReference>
<dbReference type="WormBase" id="C56A3.7c">
    <molecule id="Q18879-3"/>
    <property type="protein sequence ID" value="CE45320"/>
    <property type="gene ID" value="WBGene00000302"/>
    <property type="gene designation" value="cav-2"/>
</dbReference>
<dbReference type="WormBase" id="C56A3.7d">
    <molecule id="Q18879-4"/>
    <property type="protein sequence ID" value="CE46485"/>
    <property type="gene ID" value="WBGene00000302"/>
    <property type="gene designation" value="cav-2"/>
</dbReference>
<dbReference type="eggNOG" id="ENOG502RZYX">
    <property type="taxonomic scope" value="Eukaryota"/>
</dbReference>
<dbReference type="GeneTree" id="ENSGT00950000183006"/>
<dbReference type="InParanoid" id="Q18879"/>
<dbReference type="OMA" id="WPMFLIY"/>
<dbReference type="OrthoDB" id="5917823at2759"/>
<dbReference type="Reactome" id="R-CEL-210991">
    <property type="pathway name" value="Basigin interactions"/>
</dbReference>
<dbReference type="Reactome" id="R-CEL-4641262">
    <property type="pathway name" value="Disassembly of the destruction complex and recruitment of AXIN to the membrane"/>
</dbReference>
<dbReference type="Reactome" id="R-CEL-8980692">
    <property type="pathway name" value="RHOA GTPase cycle"/>
</dbReference>
<dbReference type="Reactome" id="R-CEL-9013026">
    <property type="pathway name" value="RHOB GTPase cycle"/>
</dbReference>
<dbReference type="Reactome" id="R-CEL-9013148">
    <property type="pathway name" value="CDC42 GTPase cycle"/>
</dbReference>
<dbReference type="Reactome" id="R-CEL-9013149">
    <property type="pathway name" value="RAC1 GTPase cycle"/>
</dbReference>
<dbReference type="Reactome" id="R-CEL-9013404">
    <property type="pathway name" value="RAC2 GTPase cycle"/>
</dbReference>
<dbReference type="Reactome" id="R-CEL-9013405">
    <property type="pathway name" value="RHOD GTPase cycle"/>
</dbReference>
<dbReference type="Reactome" id="R-CEL-9013406">
    <property type="pathway name" value="RHOQ GTPase cycle"/>
</dbReference>
<dbReference type="Reactome" id="R-CEL-9013407">
    <property type="pathway name" value="RHOH GTPase cycle"/>
</dbReference>
<dbReference type="Reactome" id="R-CEL-9013408">
    <property type="pathway name" value="RHOG GTPase cycle"/>
</dbReference>
<dbReference type="Reactome" id="R-CEL-9013423">
    <property type="pathway name" value="RAC3 GTPase cycle"/>
</dbReference>
<dbReference type="Reactome" id="R-CEL-9035034">
    <property type="pathway name" value="RHOF GTPase cycle"/>
</dbReference>
<dbReference type="PRO" id="PR:Q18879"/>
<dbReference type="Proteomes" id="UP000001940">
    <property type="component" value="Chromosome V"/>
</dbReference>
<dbReference type="Bgee" id="WBGene00000302">
    <property type="expression patterns" value="Expressed in larva and 4 other cell types or tissues"/>
</dbReference>
<dbReference type="GO" id="GO:0016324">
    <property type="term" value="C:apical plasma membrane"/>
    <property type="evidence" value="ECO:0000314"/>
    <property type="project" value="UniProtKB"/>
</dbReference>
<dbReference type="GO" id="GO:0005901">
    <property type="term" value="C:caveola"/>
    <property type="evidence" value="ECO:0000304"/>
    <property type="project" value="WormBase"/>
</dbReference>
<dbReference type="GO" id="GO:0000139">
    <property type="term" value="C:Golgi membrane"/>
    <property type="evidence" value="ECO:0007669"/>
    <property type="project" value="UniProtKB-SubCell"/>
</dbReference>
<dbReference type="GO" id="GO:0005319">
    <property type="term" value="F:lipid transporter activity"/>
    <property type="evidence" value="ECO:0000315"/>
    <property type="project" value="UniProtKB"/>
</dbReference>
<dbReference type="GO" id="GO:0060090">
    <property type="term" value="F:molecular adaptor activity"/>
    <property type="evidence" value="ECO:0000318"/>
    <property type="project" value="GO_Central"/>
</dbReference>
<dbReference type="GO" id="GO:0070836">
    <property type="term" value="P:caveola assembly"/>
    <property type="evidence" value="ECO:0000318"/>
    <property type="project" value="GO_Central"/>
</dbReference>
<dbReference type="GO" id="GO:0007166">
    <property type="term" value="P:cell surface receptor signaling pathway"/>
    <property type="evidence" value="ECO:0000304"/>
    <property type="project" value="WormBase"/>
</dbReference>
<dbReference type="GO" id="GO:0007567">
    <property type="term" value="P:parturition"/>
    <property type="evidence" value="ECO:0000315"/>
    <property type="project" value="UniProtKB"/>
</dbReference>
<dbReference type="GO" id="GO:0046662">
    <property type="term" value="P:regulation of egg-laying behavior"/>
    <property type="evidence" value="ECO:0000316"/>
    <property type="project" value="WormBase"/>
</dbReference>
<dbReference type="InterPro" id="IPR001612">
    <property type="entry name" value="Caveolin"/>
</dbReference>
<dbReference type="PANTHER" id="PTHR10844">
    <property type="entry name" value="CAVEOLIN"/>
    <property type="match status" value="1"/>
</dbReference>
<dbReference type="PANTHER" id="PTHR10844:SF19">
    <property type="entry name" value="CAVEOLIN-2"/>
    <property type="match status" value="1"/>
</dbReference>
<dbReference type="Pfam" id="PF01146">
    <property type="entry name" value="Caveolin"/>
    <property type="match status" value="1"/>
</dbReference>
<evidence type="ECO:0000250" key="1"/>
<evidence type="ECO:0000255" key="2"/>
<evidence type="ECO:0000256" key="3">
    <source>
        <dbReference type="SAM" id="MobiDB-lite"/>
    </source>
</evidence>
<evidence type="ECO:0000269" key="4">
    <source>
    </source>
</evidence>
<evidence type="ECO:0000269" key="5">
    <source>
    </source>
</evidence>
<evidence type="ECO:0000305" key="6"/>
<gene>
    <name type="primary">cav-2</name>
    <name type="ORF">C56A3.7</name>
</gene>
<accession>Q18879</accession>
<accession>E1B6T3</accession>
<accession>E1B6T4</accession>
<accession>G3MU34</accession>